<protein>
    <recommendedName>
        <fullName evidence="1">Translation initiation factor IF-1</fullName>
    </recommendedName>
</protein>
<comment type="function">
    <text evidence="1">One of the essential components for the initiation of protein synthesis. Stabilizes the binding of IF-2 and IF-3 on the 30S subunit to which N-formylmethionyl-tRNA(fMet) subsequently binds. Helps modulate mRNA selection, yielding the 30S pre-initiation complex (PIC). Upon addition of the 50S ribosomal subunit IF-1, IF-2 and IF-3 are released leaving the mature 70S translation initiation complex.</text>
</comment>
<comment type="subunit">
    <text evidence="1">Component of the 30S ribosomal translation pre-initiation complex which assembles on the 30S ribosome in the order IF-2 and IF-3, IF-1 and N-formylmethionyl-tRNA(fMet); mRNA recruitment can occur at any time during PIC assembly.</text>
</comment>
<comment type="subcellular location">
    <subcellularLocation>
        <location evidence="1">Cytoplasm</location>
    </subcellularLocation>
</comment>
<comment type="similarity">
    <text evidence="1">Belongs to the IF-1 family.</text>
</comment>
<accession>Q48H67</accession>
<dbReference type="EMBL" id="CP000058">
    <property type="protein sequence ID" value="AAZ37202.1"/>
    <property type="molecule type" value="Genomic_DNA"/>
</dbReference>
<dbReference type="RefSeq" id="WP_002553999.1">
    <property type="nucleotide sequence ID" value="NC_005773.3"/>
</dbReference>
<dbReference type="SMR" id="Q48H67"/>
<dbReference type="GeneID" id="98638452"/>
<dbReference type="KEGG" id="psp:PSPPH_3096"/>
<dbReference type="eggNOG" id="COG0361">
    <property type="taxonomic scope" value="Bacteria"/>
</dbReference>
<dbReference type="HOGENOM" id="CLU_151267_1_0_6"/>
<dbReference type="Proteomes" id="UP000000551">
    <property type="component" value="Chromosome"/>
</dbReference>
<dbReference type="GO" id="GO:0005829">
    <property type="term" value="C:cytosol"/>
    <property type="evidence" value="ECO:0007669"/>
    <property type="project" value="TreeGrafter"/>
</dbReference>
<dbReference type="GO" id="GO:0043022">
    <property type="term" value="F:ribosome binding"/>
    <property type="evidence" value="ECO:0007669"/>
    <property type="project" value="UniProtKB-UniRule"/>
</dbReference>
<dbReference type="GO" id="GO:0019843">
    <property type="term" value="F:rRNA binding"/>
    <property type="evidence" value="ECO:0007669"/>
    <property type="project" value="UniProtKB-UniRule"/>
</dbReference>
<dbReference type="GO" id="GO:0003743">
    <property type="term" value="F:translation initiation factor activity"/>
    <property type="evidence" value="ECO:0007669"/>
    <property type="project" value="UniProtKB-UniRule"/>
</dbReference>
<dbReference type="CDD" id="cd04451">
    <property type="entry name" value="S1_IF1"/>
    <property type="match status" value="1"/>
</dbReference>
<dbReference type="FunFam" id="2.40.50.140:FF:000002">
    <property type="entry name" value="Translation initiation factor IF-1"/>
    <property type="match status" value="1"/>
</dbReference>
<dbReference type="Gene3D" id="2.40.50.140">
    <property type="entry name" value="Nucleic acid-binding proteins"/>
    <property type="match status" value="1"/>
</dbReference>
<dbReference type="HAMAP" id="MF_00075">
    <property type="entry name" value="IF_1"/>
    <property type="match status" value="1"/>
</dbReference>
<dbReference type="InterPro" id="IPR012340">
    <property type="entry name" value="NA-bd_OB-fold"/>
</dbReference>
<dbReference type="InterPro" id="IPR006196">
    <property type="entry name" value="RNA-binding_domain_S1_IF1"/>
</dbReference>
<dbReference type="InterPro" id="IPR003029">
    <property type="entry name" value="S1_domain"/>
</dbReference>
<dbReference type="InterPro" id="IPR004368">
    <property type="entry name" value="TIF_IF1"/>
</dbReference>
<dbReference type="NCBIfam" id="TIGR00008">
    <property type="entry name" value="infA"/>
    <property type="match status" value="1"/>
</dbReference>
<dbReference type="PANTHER" id="PTHR33370">
    <property type="entry name" value="TRANSLATION INITIATION FACTOR IF-1, CHLOROPLASTIC"/>
    <property type="match status" value="1"/>
</dbReference>
<dbReference type="PANTHER" id="PTHR33370:SF1">
    <property type="entry name" value="TRANSLATION INITIATION FACTOR IF-1, CHLOROPLASTIC"/>
    <property type="match status" value="1"/>
</dbReference>
<dbReference type="Pfam" id="PF01176">
    <property type="entry name" value="eIF-1a"/>
    <property type="match status" value="1"/>
</dbReference>
<dbReference type="SMART" id="SM00316">
    <property type="entry name" value="S1"/>
    <property type="match status" value="1"/>
</dbReference>
<dbReference type="SUPFAM" id="SSF50249">
    <property type="entry name" value="Nucleic acid-binding proteins"/>
    <property type="match status" value="1"/>
</dbReference>
<dbReference type="PROSITE" id="PS50832">
    <property type="entry name" value="S1_IF1_TYPE"/>
    <property type="match status" value="1"/>
</dbReference>
<gene>
    <name evidence="1" type="primary">infA</name>
    <name type="ordered locus">PSPPH_3096</name>
</gene>
<proteinExistence type="inferred from homology"/>
<name>IF1_PSE14</name>
<organism>
    <name type="scientific">Pseudomonas savastanoi pv. phaseolicola (strain 1448A / Race 6)</name>
    <name type="common">Pseudomonas syringae pv. phaseolicola (strain 1448A / Race 6)</name>
    <dbReference type="NCBI Taxonomy" id="264730"/>
    <lineage>
        <taxon>Bacteria</taxon>
        <taxon>Pseudomonadati</taxon>
        <taxon>Pseudomonadota</taxon>
        <taxon>Gammaproteobacteria</taxon>
        <taxon>Pseudomonadales</taxon>
        <taxon>Pseudomonadaceae</taxon>
        <taxon>Pseudomonas</taxon>
    </lineage>
</organism>
<sequence length="72" mass="8303">MSKEDSFEMEGTVVDTLPNTMFRVELENGHVVTAHISGKMRKNYIRILTGDKVRVELTPYDLSKGRITYRAR</sequence>
<reference key="1">
    <citation type="journal article" date="2005" name="J. Bacteriol.">
        <title>Whole-genome sequence analysis of Pseudomonas syringae pv. phaseolicola 1448A reveals divergence among pathovars in genes involved in virulence and transposition.</title>
        <authorList>
            <person name="Joardar V."/>
            <person name="Lindeberg M."/>
            <person name="Jackson R.W."/>
            <person name="Selengut J."/>
            <person name="Dodson R."/>
            <person name="Brinkac L.M."/>
            <person name="Daugherty S.C."/>
            <person name="DeBoy R.T."/>
            <person name="Durkin A.S."/>
            <person name="Gwinn Giglio M."/>
            <person name="Madupu R."/>
            <person name="Nelson W.C."/>
            <person name="Rosovitz M.J."/>
            <person name="Sullivan S.A."/>
            <person name="Crabtree J."/>
            <person name="Creasy T."/>
            <person name="Davidsen T.M."/>
            <person name="Haft D.H."/>
            <person name="Zafar N."/>
            <person name="Zhou L."/>
            <person name="Halpin R."/>
            <person name="Holley T."/>
            <person name="Khouri H.M."/>
            <person name="Feldblyum T.V."/>
            <person name="White O."/>
            <person name="Fraser C.M."/>
            <person name="Chatterjee A.K."/>
            <person name="Cartinhour S."/>
            <person name="Schneider D."/>
            <person name="Mansfield J.W."/>
            <person name="Collmer A."/>
            <person name="Buell R."/>
        </authorList>
    </citation>
    <scope>NUCLEOTIDE SEQUENCE [LARGE SCALE GENOMIC DNA]</scope>
    <source>
        <strain>1448A / Race 6</strain>
    </source>
</reference>
<evidence type="ECO:0000255" key="1">
    <source>
        <dbReference type="HAMAP-Rule" id="MF_00075"/>
    </source>
</evidence>
<keyword id="KW-0963">Cytoplasm</keyword>
<keyword id="KW-0396">Initiation factor</keyword>
<keyword id="KW-0648">Protein biosynthesis</keyword>
<keyword id="KW-0694">RNA-binding</keyword>
<keyword id="KW-0699">rRNA-binding</keyword>
<feature type="chain" id="PRO_0000263842" description="Translation initiation factor IF-1">
    <location>
        <begin position="1"/>
        <end position="72"/>
    </location>
</feature>
<feature type="domain" description="S1-like" evidence="1">
    <location>
        <begin position="1"/>
        <end position="72"/>
    </location>
</feature>